<feature type="chain" id="PRO_0000192788" description="Intron-encoded endonuclease I-PpoI">
    <location>
        <begin position="1"/>
        <end position="163"/>
    </location>
</feature>
<feature type="helix" evidence="3">
    <location>
        <begin position="5"/>
        <end position="19"/>
    </location>
</feature>
<feature type="strand" evidence="3">
    <location>
        <begin position="24"/>
        <end position="32"/>
    </location>
</feature>
<feature type="strand" evidence="3">
    <location>
        <begin position="35"/>
        <end position="43"/>
    </location>
</feature>
<feature type="strand" evidence="3">
    <location>
        <begin position="46"/>
        <end position="48"/>
    </location>
</feature>
<feature type="strand" evidence="3">
    <location>
        <begin position="54"/>
        <end position="58"/>
    </location>
</feature>
<feature type="strand" evidence="3">
    <location>
        <begin position="61"/>
        <end position="68"/>
    </location>
</feature>
<feature type="strand" evidence="3">
    <location>
        <begin position="71"/>
        <end position="76"/>
    </location>
</feature>
<feature type="turn" evidence="3">
    <location>
        <begin position="77"/>
        <end position="79"/>
    </location>
</feature>
<feature type="helix" evidence="3">
    <location>
        <begin position="80"/>
        <end position="82"/>
    </location>
</feature>
<feature type="strand" evidence="2">
    <location>
        <begin position="83"/>
        <end position="85"/>
    </location>
</feature>
<feature type="strand" evidence="3">
    <location>
        <begin position="87"/>
        <end position="89"/>
    </location>
</feature>
<feature type="strand" evidence="3">
    <location>
        <begin position="92"/>
        <end position="98"/>
    </location>
</feature>
<feature type="helix" evidence="3">
    <location>
        <begin position="108"/>
        <end position="110"/>
    </location>
</feature>
<feature type="strand" evidence="3">
    <location>
        <begin position="111"/>
        <end position="115"/>
    </location>
</feature>
<feature type="helix" evidence="3">
    <location>
        <begin position="116"/>
        <end position="121"/>
    </location>
</feature>
<feature type="helix" evidence="3">
    <location>
        <begin position="122"/>
        <end position="124"/>
    </location>
</feature>
<feature type="turn" evidence="3">
    <location>
        <begin position="128"/>
        <end position="131"/>
    </location>
</feature>
<feature type="strand" evidence="3">
    <location>
        <begin position="157"/>
        <end position="160"/>
    </location>
</feature>
<protein>
    <recommendedName>
        <fullName>Intron-encoded endonuclease I-PpoI</fullName>
        <shortName>I-Ppo</shortName>
        <ecNumber>3.1.-.-</ecNumber>
    </recommendedName>
</protein>
<sequence length="163" mass="17789">MALTNAQILAVIDSWEETVGQFPVITHHVPLGGGLQGTLHCYEIPLAAPYGVGFAKNGPTRWQYKRTINQVVHRWGSHTVPFLLEPDNINGKTCTASHLCHNTRCHNPLHLCWESLDDNKGRNWCPGPNGGCVHAVVCLRQGPLYGPGATVAGPQQRGSHFVV</sequence>
<keyword id="KW-0002">3D-structure</keyword>
<keyword id="KW-0255">Endonuclease</keyword>
<keyword id="KW-0378">Hydrolase</keyword>
<keyword id="KW-0404">Intron homing</keyword>
<keyword id="KW-0540">Nuclease</keyword>
<keyword id="KW-0862">Zinc</keyword>
<dbReference type="EC" id="3.1.-.-"/>
<dbReference type="EMBL" id="M38131">
    <property type="protein sequence ID" value="AAB65765.1"/>
    <property type="molecule type" value="Genomic_DNA"/>
</dbReference>
<dbReference type="EMBL" id="M38131">
    <property type="protein sequence ID" value="AAB65764.1"/>
    <property type="status" value="ALT_INIT"/>
    <property type="molecule type" value="Genomic_DNA"/>
</dbReference>
<dbReference type="PDB" id="1A73">
    <property type="method" value="X-ray"/>
    <property type="resolution" value="1.80 A"/>
    <property type="chains" value="A/B=1-163"/>
</dbReference>
<dbReference type="PDB" id="1A74">
    <property type="method" value="X-ray"/>
    <property type="resolution" value="2.20 A"/>
    <property type="chains" value="A/B=1-163"/>
</dbReference>
<dbReference type="PDB" id="1CYQ">
    <property type="method" value="X-ray"/>
    <property type="resolution" value="1.93 A"/>
    <property type="chains" value="A/B=2-163"/>
</dbReference>
<dbReference type="PDB" id="1CZ0">
    <property type="method" value="X-ray"/>
    <property type="resolution" value="2.10 A"/>
    <property type="chains" value="A/B=2-163"/>
</dbReference>
<dbReference type="PDB" id="1EVW">
    <property type="method" value="X-ray"/>
    <property type="resolution" value="3.10 A"/>
    <property type="chains" value="A/B/C/D=1-163"/>
</dbReference>
<dbReference type="PDB" id="1EVX">
    <property type="method" value="X-ray"/>
    <property type="resolution" value="2.00 A"/>
    <property type="chains" value="A/B=2-163"/>
</dbReference>
<dbReference type="PDB" id="1IPP">
    <property type="method" value="X-ray"/>
    <property type="resolution" value="2.20 A"/>
    <property type="chains" value="A/B=1-163"/>
</dbReference>
<dbReference type="PDB" id="2O6M">
    <property type="method" value="X-ray"/>
    <property type="resolution" value="2.30 A"/>
    <property type="chains" value="A/B=1-163"/>
</dbReference>
<dbReference type="PDB" id="8VMO">
    <property type="method" value="X-ray"/>
    <property type="resolution" value="1.68 A"/>
    <property type="chains" value="A/B=2-163"/>
</dbReference>
<dbReference type="PDB" id="8VMP">
    <property type="method" value="X-ray"/>
    <property type="resolution" value="1.45 A"/>
    <property type="chains" value="A/B=2-163"/>
</dbReference>
<dbReference type="PDB" id="8VMQ">
    <property type="method" value="X-ray"/>
    <property type="resolution" value="1.48 A"/>
    <property type="chains" value="A/B=2-163"/>
</dbReference>
<dbReference type="PDB" id="8VMR">
    <property type="method" value="X-ray"/>
    <property type="resolution" value="1.50 A"/>
    <property type="chains" value="A/B=2-163"/>
</dbReference>
<dbReference type="PDB" id="8VMS">
    <property type="method" value="X-ray"/>
    <property type="resolution" value="1.42 A"/>
    <property type="chains" value="A/B=2-163"/>
</dbReference>
<dbReference type="PDB" id="8VMT">
    <property type="method" value="X-ray"/>
    <property type="resolution" value="1.48 A"/>
    <property type="chains" value="A/B=2-163"/>
</dbReference>
<dbReference type="PDB" id="8VMU">
    <property type="method" value="X-ray"/>
    <property type="resolution" value="1.52 A"/>
    <property type="chains" value="A/B=2-163"/>
</dbReference>
<dbReference type="PDB" id="8VMV">
    <property type="method" value="X-ray"/>
    <property type="resolution" value="1.59 A"/>
    <property type="chains" value="A/B=2-163"/>
</dbReference>
<dbReference type="PDB" id="8VMW">
    <property type="method" value="X-ray"/>
    <property type="resolution" value="1.60 A"/>
    <property type="chains" value="A/B=2-163"/>
</dbReference>
<dbReference type="PDB" id="8VMX">
    <property type="method" value="X-ray"/>
    <property type="resolution" value="1.45 A"/>
    <property type="chains" value="A/B=2-163"/>
</dbReference>
<dbReference type="PDB" id="8VMY">
    <property type="method" value="X-ray"/>
    <property type="resolution" value="1.53 A"/>
    <property type="chains" value="A/B=2-163"/>
</dbReference>
<dbReference type="PDB" id="8VMZ">
    <property type="method" value="X-ray"/>
    <property type="resolution" value="1.57 A"/>
    <property type="chains" value="A/B=2-163"/>
</dbReference>
<dbReference type="PDB" id="8VN0">
    <property type="method" value="X-ray"/>
    <property type="resolution" value="1.60 A"/>
    <property type="chains" value="A/B=2-163"/>
</dbReference>
<dbReference type="PDB" id="8VN1">
    <property type="method" value="X-ray"/>
    <property type="resolution" value="1.79 A"/>
    <property type="chains" value="A/B=2-163"/>
</dbReference>
<dbReference type="PDB" id="8VN2">
    <property type="method" value="X-ray"/>
    <property type="resolution" value="1.63 A"/>
    <property type="chains" value="A/B=2-163"/>
</dbReference>
<dbReference type="PDB" id="8VN3">
    <property type="method" value="X-ray"/>
    <property type="resolution" value="1.63 A"/>
    <property type="chains" value="A/B=2-163"/>
</dbReference>
<dbReference type="PDB" id="8VN4">
    <property type="method" value="X-ray"/>
    <property type="resolution" value="1.75 A"/>
    <property type="chains" value="A/B=2-163"/>
</dbReference>
<dbReference type="PDB" id="8VN5">
    <property type="method" value="X-ray"/>
    <property type="resolution" value="1.65 A"/>
    <property type="chains" value="A/B=2-163"/>
</dbReference>
<dbReference type="PDB" id="8VN6">
    <property type="method" value="X-ray"/>
    <property type="resolution" value="1.54 A"/>
    <property type="chains" value="A/B=2-163"/>
</dbReference>
<dbReference type="PDB" id="8VN7">
    <property type="method" value="X-ray"/>
    <property type="resolution" value="1.67 A"/>
    <property type="chains" value="A/B=2-163"/>
</dbReference>
<dbReference type="PDB" id="8VN8">
    <property type="method" value="X-ray"/>
    <property type="resolution" value="1.60 A"/>
    <property type="chains" value="A/B=2-163"/>
</dbReference>
<dbReference type="PDB" id="8VN9">
    <property type="method" value="X-ray"/>
    <property type="resolution" value="1.69 A"/>
    <property type="chains" value="A/B=2-163"/>
</dbReference>
<dbReference type="PDB" id="8VNA">
    <property type="method" value="X-ray"/>
    <property type="resolution" value="1.54 A"/>
    <property type="chains" value="A/B=2-163"/>
</dbReference>
<dbReference type="PDB" id="8VNB">
    <property type="method" value="X-ray"/>
    <property type="resolution" value="1.72 A"/>
    <property type="chains" value="A/B=2-163"/>
</dbReference>
<dbReference type="PDB" id="8VNC">
    <property type="method" value="X-ray"/>
    <property type="resolution" value="1.62 A"/>
    <property type="chains" value="A/B=2-163"/>
</dbReference>
<dbReference type="PDB" id="8VND">
    <property type="method" value="X-ray"/>
    <property type="resolution" value="1.60 A"/>
    <property type="chains" value="A/B=2-163"/>
</dbReference>
<dbReference type="PDB" id="8VNE">
    <property type="method" value="X-ray"/>
    <property type="resolution" value="1.57 A"/>
    <property type="chains" value="A/B=2-163"/>
</dbReference>
<dbReference type="PDB" id="8VNF">
    <property type="method" value="X-ray"/>
    <property type="resolution" value="1.50 A"/>
    <property type="chains" value="A/B=2-163"/>
</dbReference>
<dbReference type="PDB" id="8VNG">
    <property type="method" value="X-ray"/>
    <property type="resolution" value="1.60 A"/>
    <property type="chains" value="A/B=2-163"/>
</dbReference>
<dbReference type="PDB" id="8VNH">
    <property type="method" value="X-ray"/>
    <property type="resolution" value="1.76 A"/>
    <property type="chains" value="A/B=2-163"/>
</dbReference>
<dbReference type="PDB" id="8VNJ">
    <property type="method" value="X-ray"/>
    <property type="resolution" value="1.61 A"/>
    <property type="chains" value="A/B=2-163"/>
</dbReference>
<dbReference type="PDB" id="8VNK">
    <property type="method" value="X-ray"/>
    <property type="resolution" value="1.61 A"/>
    <property type="chains" value="A/B=2-163"/>
</dbReference>
<dbReference type="PDB" id="8VNL">
    <property type="method" value="X-ray"/>
    <property type="resolution" value="1.64 A"/>
    <property type="chains" value="A/B=2-163"/>
</dbReference>
<dbReference type="PDB" id="8VNM">
    <property type="method" value="X-ray"/>
    <property type="resolution" value="1.59 A"/>
    <property type="chains" value="A/B=2-163"/>
</dbReference>
<dbReference type="PDB" id="8VNN">
    <property type="method" value="X-ray"/>
    <property type="resolution" value="1.79 A"/>
    <property type="chains" value="A/B=2-163"/>
</dbReference>
<dbReference type="PDB" id="8VNO">
    <property type="method" value="X-ray"/>
    <property type="resolution" value="1.70 A"/>
    <property type="chains" value="A/B=2-163"/>
</dbReference>
<dbReference type="PDB" id="8VNP">
    <property type="method" value="X-ray"/>
    <property type="resolution" value="1.79 A"/>
    <property type="chains" value="A/B=2-163"/>
</dbReference>
<dbReference type="PDB" id="8VNQ">
    <property type="method" value="X-ray"/>
    <property type="resolution" value="1.93 A"/>
    <property type="chains" value="A/B=2-163"/>
</dbReference>
<dbReference type="PDB" id="8VNR">
    <property type="method" value="X-ray"/>
    <property type="resolution" value="1.98 A"/>
    <property type="chains" value="A/B=2-163"/>
</dbReference>
<dbReference type="PDB" id="8VNS">
    <property type="method" value="X-ray"/>
    <property type="resolution" value="2.11 A"/>
    <property type="chains" value="A/B=2-163"/>
</dbReference>
<dbReference type="PDB" id="8VNT">
    <property type="method" value="X-ray"/>
    <property type="resolution" value="1.62 A"/>
    <property type="chains" value="A/B=2-163"/>
</dbReference>
<dbReference type="PDB" id="8VNU">
    <property type="method" value="X-ray"/>
    <property type="resolution" value="2.20 A"/>
    <property type="chains" value="A/B=2-163"/>
</dbReference>
<dbReference type="PDBsum" id="1A73"/>
<dbReference type="PDBsum" id="1A74"/>
<dbReference type="PDBsum" id="1CYQ"/>
<dbReference type="PDBsum" id="1CZ0"/>
<dbReference type="PDBsum" id="1EVW"/>
<dbReference type="PDBsum" id="1EVX"/>
<dbReference type="PDBsum" id="1IPP"/>
<dbReference type="PDBsum" id="2O6M"/>
<dbReference type="PDBsum" id="8VMO"/>
<dbReference type="PDBsum" id="8VMP"/>
<dbReference type="PDBsum" id="8VMQ"/>
<dbReference type="PDBsum" id="8VMR"/>
<dbReference type="PDBsum" id="8VMS"/>
<dbReference type="PDBsum" id="8VMT"/>
<dbReference type="PDBsum" id="8VMU"/>
<dbReference type="PDBsum" id="8VMV"/>
<dbReference type="PDBsum" id="8VMW"/>
<dbReference type="PDBsum" id="8VMX"/>
<dbReference type="PDBsum" id="8VMY"/>
<dbReference type="PDBsum" id="8VMZ"/>
<dbReference type="PDBsum" id="8VN0"/>
<dbReference type="PDBsum" id="8VN1"/>
<dbReference type="PDBsum" id="8VN2"/>
<dbReference type="PDBsum" id="8VN3"/>
<dbReference type="PDBsum" id="8VN4"/>
<dbReference type="PDBsum" id="8VN5"/>
<dbReference type="PDBsum" id="8VN6"/>
<dbReference type="PDBsum" id="8VN7"/>
<dbReference type="PDBsum" id="8VN8"/>
<dbReference type="PDBsum" id="8VN9"/>
<dbReference type="PDBsum" id="8VNA"/>
<dbReference type="PDBsum" id="8VNB"/>
<dbReference type="PDBsum" id="8VNC"/>
<dbReference type="PDBsum" id="8VND"/>
<dbReference type="PDBsum" id="8VNE"/>
<dbReference type="PDBsum" id="8VNF"/>
<dbReference type="PDBsum" id="8VNG"/>
<dbReference type="PDBsum" id="8VNH"/>
<dbReference type="PDBsum" id="8VNJ"/>
<dbReference type="PDBsum" id="8VNK"/>
<dbReference type="PDBsum" id="8VNL"/>
<dbReference type="PDBsum" id="8VNM"/>
<dbReference type="PDBsum" id="8VNN"/>
<dbReference type="PDBsum" id="8VNO"/>
<dbReference type="PDBsum" id="8VNP"/>
<dbReference type="PDBsum" id="8VNQ"/>
<dbReference type="PDBsum" id="8VNR"/>
<dbReference type="PDBsum" id="8VNS"/>
<dbReference type="PDBsum" id="8VNT"/>
<dbReference type="PDBsum" id="8VNU"/>
<dbReference type="SMR" id="Q94702"/>
<dbReference type="REBASE" id="2469">
    <property type="entry name" value="I-PpoI"/>
</dbReference>
<dbReference type="EvolutionaryTrace" id="Q94702"/>
<dbReference type="GO" id="GO:0004519">
    <property type="term" value="F:endonuclease activity"/>
    <property type="evidence" value="ECO:0007669"/>
    <property type="project" value="UniProtKB-KW"/>
</dbReference>
<dbReference type="GO" id="GO:0006314">
    <property type="term" value="P:intron homing"/>
    <property type="evidence" value="ECO:0007669"/>
    <property type="project" value="UniProtKB-KW"/>
</dbReference>
<dbReference type="CDD" id="cd23511">
    <property type="entry name" value="I-PpoI"/>
    <property type="match status" value="1"/>
</dbReference>
<dbReference type="Gene3D" id="3.90.75.10">
    <property type="entry name" value="Homing Intron 3 (I-ppo) Encoded Endonuclease, Chain A"/>
    <property type="match status" value="1"/>
</dbReference>
<dbReference type="InterPro" id="IPR008704">
    <property type="entry name" value="Endonuclease_Zinc-binding_loop"/>
</dbReference>
<dbReference type="InterPro" id="IPR044925">
    <property type="entry name" value="His-Me_finger_sf"/>
</dbReference>
<dbReference type="InterPro" id="IPR044930">
    <property type="entry name" value="Homing_endonuclease_His-Me"/>
</dbReference>
<dbReference type="Pfam" id="PF05551">
    <property type="entry name" value="zf-His_Me_endon"/>
    <property type="match status" value="1"/>
</dbReference>
<dbReference type="SUPFAM" id="SSF54060">
    <property type="entry name" value="His-Me finger endonucleases"/>
    <property type="match status" value="1"/>
</dbReference>
<accession>Q94702</accession>
<reference key="1">
    <citation type="journal article" date="1990" name="Mol. Cell. Biol.">
        <title>Characterization of I-Ppo, an intron-encoded endonuclease that mediates homing of a group I intron in the ribosomal DNA of Physarum polycephalum.</title>
        <authorList>
            <person name="Muscarella D.E."/>
            <person name="Ellison E.L."/>
            <person name="Ruoff B.M."/>
            <person name="Vogt V.M."/>
        </authorList>
    </citation>
    <scope>NUCLEOTIDE SEQUENCE [GENOMIC DNA]</scope>
</reference>
<reference key="2">
    <citation type="submission" date="1997-08" db="EMBL/GenBank/DDBJ databases">
        <authorList>
            <person name="Vogt V.M."/>
        </authorList>
    </citation>
    <scope>SEQUENCE REVISION</scope>
</reference>
<reference key="3">
    <citation type="journal article" date="1998" name="Nature">
        <title>DNA binding and cleavage by the nuclear intron-encoded homing endonuclease I-PpoI.</title>
        <authorList>
            <person name="Flick K.E."/>
            <person name="Jurica M.S."/>
            <person name="Monnat R.J. Jr."/>
            <person name="Stoddard B.L."/>
        </authorList>
    </citation>
    <scope>X-RAY CRYSTALLOGRAPHY (2.2 ANGSTROMS)</scope>
</reference>
<reference key="4">
    <citation type="journal article" date="1999" name="Nat. Struct. Biol.">
        <title>A novel endonuclease mechanism directly visualized for I-PpoI.</title>
        <authorList>
            <person name="Galburt E.A."/>
            <person name="Chevalier B."/>
            <person name="Tang W."/>
            <person name="Jurica M.S."/>
            <person name="Flick K.E."/>
            <person name="Monnat R.J. Jr."/>
            <person name="Stoddard B.L."/>
        </authorList>
    </citation>
    <scope>X-RAY CRYSTALLOGRAPHY (1.93 ANGSTROMS)</scope>
</reference>
<reference key="5">
    <citation type="journal article" date="2000" name="J. Mol. Biol.">
        <title>Conformational changes and cleavage by the homing endonuclease I-PpoI: a critical role for a leucine residue in the active site.</title>
        <authorList>
            <person name="Galburt E.A."/>
            <person name="Chadsey M.S."/>
            <person name="Jurica M.S."/>
            <person name="Chevalier B.S."/>
            <person name="Erho D."/>
            <person name="Tang W."/>
            <person name="Monnat R.J. Jr."/>
            <person name="Stoddard B.L."/>
        </authorList>
    </citation>
    <scope>X-RAY CRYSTALLOGRAPHY (2.0 ANGSTROMS)</scope>
</reference>
<name>PPO1_PHYPO</name>
<comment type="function">
    <text>Mediates the homing of a group I intron in the ribosomal DNA. Makes a four-base staggered cut in its ribosomal DNA target sequence.</text>
</comment>
<comment type="cofactor">
    <cofactor>
        <name>Zn(2+)</name>
        <dbReference type="ChEBI" id="CHEBI:29105"/>
    </cofactor>
</comment>
<comment type="subunit">
    <text>Homodimer.</text>
</comment>
<comment type="sequence caution" evidence="1">
    <conflict type="erroneous initiation">
        <sequence resource="EMBL-CDS" id="AAB65764"/>
    </conflict>
</comment>
<proteinExistence type="evidence at protein level"/>
<evidence type="ECO:0000305" key="1"/>
<evidence type="ECO:0007829" key="2">
    <source>
        <dbReference type="PDB" id="1EVW"/>
    </source>
</evidence>
<evidence type="ECO:0007829" key="3">
    <source>
        <dbReference type="PDB" id="8VMS"/>
    </source>
</evidence>
<organism>
    <name type="scientific">Physarum polycephalum</name>
    <name type="common">Slime mold</name>
    <dbReference type="NCBI Taxonomy" id="5791"/>
    <lineage>
        <taxon>Eukaryota</taxon>
        <taxon>Amoebozoa</taxon>
        <taxon>Evosea</taxon>
        <taxon>Eumycetozoa</taxon>
        <taxon>Myxogastria</taxon>
        <taxon>Myxogastromycetidae</taxon>
        <taxon>Physariida</taxon>
        <taxon>Physaraceae</taxon>
        <taxon>Physarum</taxon>
    </lineage>
</organism>